<name>CSK2C_SCHPO</name>
<accession>O94281</accession>
<proteinExistence type="inferred from homology"/>
<feature type="chain" id="PRO_0000068256" description="Casein kinase II subunit beta-2">
    <location>
        <begin position="1"/>
        <end position="254"/>
    </location>
</feature>
<gene>
    <name evidence="4" type="primary">ckb2</name>
    <name evidence="4" type="ORF">SPBC2G5.02c</name>
</gene>
<keyword id="KW-0597">Phosphoprotein</keyword>
<keyword id="KW-1185">Reference proteome</keyword>
<protein>
    <recommendedName>
        <fullName>Casein kinase II subunit beta-2</fullName>
        <shortName>CK II beta-2</shortName>
    </recommendedName>
</protein>
<dbReference type="EMBL" id="CU329671">
    <property type="protein sequence ID" value="CAA21878.1"/>
    <property type="molecule type" value="Genomic_DNA"/>
</dbReference>
<dbReference type="PIR" id="T40159">
    <property type="entry name" value="T40159"/>
</dbReference>
<dbReference type="RefSeq" id="NP_596063.1">
    <property type="nucleotide sequence ID" value="NM_001021974.2"/>
</dbReference>
<dbReference type="SMR" id="O94281"/>
<dbReference type="BioGRID" id="276836">
    <property type="interactions" value="97"/>
</dbReference>
<dbReference type="FunCoup" id="O94281">
    <property type="interactions" value="172"/>
</dbReference>
<dbReference type="STRING" id="284812.O94281"/>
<dbReference type="iPTMnet" id="O94281"/>
<dbReference type="PaxDb" id="4896-SPBC2G5.02c.1"/>
<dbReference type="EnsemblFungi" id="SPBC2G5.02c.1">
    <property type="protein sequence ID" value="SPBC2G5.02c.1:pep"/>
    <property type="gene ID" value="SPBC2G5.02c"/>
</dbReference>
<dbReference type="GeneID" id="2540306"/>
<dbReference type="KEGG" id="spo:2540306"/>
<dbReference type="PomBase" id="SPBC2G5.02c">
    <property type="gene designation" value="ckb2"/>
</dbReference>
<dbReference type="VEuPathDB" id="FungiDB:SPBC2G5.02c"/>
<dbReference type="eggNOG" id="KOG3092">
    <property type="taxonomic scope" value="Eukaryota"/>
</dbReference>
<dbReference type="HOGENOM" id="CLU_034027_3_1_1"/>
<dbReference type="InParanoid" id="O94281"/>
<dbReference type="OMA" id="QNGSPMA"/>
<dbReference type="PhylomeDB" id="O94281"/>
<dbReference type="PRO" id="PR:O94281"/>
<dbReference type="Proteomes" id="UP000002485">
    <property type="component" value="Chromosome II"/>
</dbReference>
<dbReference type="GO" id="GO:0005737">
    <property type="term" value="C:cytoplasm"/>
    <property type="evidence" value="ECO:0000318"/>
    <property type="project" value="GO_Central"/>
</dbReference>
<dbReference type="GO" id="GO:0005634">
    <property type="term" value="C:nucleus"/>
    <property type="evidence" value="ECO:0007005"/>
    <property type="project" value="PomBase"/>
</dbReference>
<dbReference type="GO" id="GO:0005956">
    <property type="term" value="C:protein kinase CK2 complex"/>
    <property type="evidence" value="ECO:0000318"/>
    <property type="project" value="GO_Central"/>
</dbReference>
<dbReference type="GO" id="GO:0034456">
    <property type="term" value="C:UTP-C complex"/>
    <property type="evidence" value="ECO:0000318"/>
    <property type="project" value="GO_Central"/>
</dbReference>
<dbReference type="GO" id="GO:0019887">
    <property type="term" value="F:protein kinase regulator activity"/>
    <property type="evidence" value="ECO:0000318"/>
    <property type="project" value="GO_Central"/>
</dbReference>
<dbReference type="GO" id="GO:0030291">
    <property type="term" value="F:protein serine/threonine kinase inhibitor activity"/>
    <property type="evidence" value="ECO:0000266"/>
    <property type="project" value="PomBase"/>
</dbReference>
<dbReference type="GO" id="GO:0006356">
    <property type="term" value="P:regulation of transcription by RNA polymerase I"/>
    <property type="evidence" value="ECO:0000266"/>
    <property type="project" value="PomBase"/>
</dbReference>
<dbReference type="GO" id="GO:0006359">
    <property type="term" value="P:regulation of transcription by RNA polymerase III"/>
    <property type="evidence" value="ECO:0000318"/>
    <property type="project" value="GO_Central"/>
</dbReference>
<dbReference type="GO" id="GO:0007165">
    <property type="term" value="P:signal transduction"/>
    <property type="evidence" value="ECO:0000305"/>
    <property type="project" value="PomBase"/>
</dbReference>
<dbReference type="FunFam" id="1.10.1820.10:FF:000006">
    <property type="entry name" value="Casein kinase II subunit beta"/>
    <property type="match status" value="1"/>
</dbReference>
<dbReference type="FunFam" id="2.20.25.20:FF:000001">
    <property type="entry name" value="Casein kinase II subunit beta"/>
    <property type="match status" value="1"/>
</dbReference>
<dbReference type="Gene3D" id="2.20.25.20">
    <property type="match status" value="1"/>
</dbReference>
<dbReference type="Gene3D" id="1.10.1820.10">
    <property type="entry name" value="protein kinase ck2 holoenzyme, chain C, domain 1"/>
    <property type="match status" value="1"/>
</dbReference>
<dbReference type="InterPro" id="IPR016149">
    <property type="entry name" value="Casein_kin_II_reg-sub_N"/>
</dbReference>
<dbReference type="InterPro" id="IPR035991">
    <property type="entry name" value="Casein_kinase_II_beta-like"/>
</dbReference>
<dbReference type="InterPro" id="IPR000704">
    <property type="entry name" value="Casein_kinase_II_reg-sub"/>
</dbReference>
<dbReference type="PANTHER" id="PTHR11740">
    <property type="entry name" value="CASEIN KINASE II SUBUNIT BETA"/>
    <property type="match status" value="1"/>
</dbReference>
<dbReference type="PANTHER" id="PTHR11740:SF0">
    <property type="entry name" value="CASEIN KINASE II SUBUNIT BETA"/>
    <property type="match status" value="1"/>
</dbReference>
<dbReference type="Pfam" id="PF01214">
    <property type="entry name" value="CK_II_beta"/>
    <property type="match status" value="1"/>
</dbReference>
<dbReference type="PRINTS" id="PR00472">
    <property type="entry name" value="CASNKINASEII"/>
</dbReference>
<dbReference type="SMART" id="SM01085">
    <property type="entry name" value="CK_II_beta"/>
    <property type="match status" value="1"/>
</dbReference>
<dbReference type="SUPFAM" id="SSF57798">
    <property type="entry name" value="Casein kinase II beta subunit"/>
    <property type="match status" value="1"/>
</dbReference>
<dbReference type="PROSITE" id="PS01101">
    <property type="entry name" value="CK2_BETA"/>
    <property type="match status" value="1"/>
</dbReference>
<sequence length="254" mass="29061">MSRKNLIKLNHDPTVTYSTKDDADELFDDLSSSPLHENVSWISWFCSRPGREYFVEVKEDFIEDLFNLTGLNLAVPFYNEALDLILDRTAPDTLENFDMDVIETSAQILYGLIHQRYIITRTGLHQMAEKYSMGIFGCCPRVNCCYTHVLPAGLSDIVGKMPVMLFCPNCLDLYAPSSSRYKNIDGSFFGATFPHLFFESYPELNPKRSIPCGKIYQPRIYGFKVSELSKTGPRMQWLRMYLEDSGSDSESESD</sequence>
<organism>
    <name type="scientific">Schizosaccharomyces pombe (strain 972 / ATCC 24843)</name>
    <name type="common">Fission yeast</name>
    <dbReference type="NCBI Taxonomy" id="284812"/>
    <lineage>
        <taxon>Eukaryota</taxon>
        <taxon>Fungi</taxon>
        <taxon>Dikarya</taxon>
        <taxon>Ascomycota</taxon>
        <taxon>Taphrinomycotina</taxon>
        <taxon>Schizosaccharomycetes</taxon>
        <taxon>Schizosaccharomycetales</taxon>
        <taxon>Schizosaccharomycetaceae</taxon>
        <taxon>Schizosaccharomyces</taxon>
    </lineage>
</organism>
<reference key="1">
    <citation type="journal article" date="2002" name="Nature">
        <title>The genome sequence of Schizosaccharomyces pombe.</title>
        <authorList>
            <person name="Wood V."/>
            <person name="Gwilliam R."/>
            <person name="Rajandream M.A."/>
            <person name="Lyne M.H."/>
            <person name="Lyne R."/>
            <person name="Stewart A."/>
            <person name="Sgouros J.G."/>
            <person name="Peat N."/>
            <person name="Hayles J."/>
            <person name="Baker S.G."/>
            <person name="Basham D."/>
            <person name="Bowman S."/>
            <person name="Brooks K."/>
            <person name="Brown D."/>
            <person name="Brown S."/>
            <person name="Chillingworth T."/>
            <person name="Churcher C.M."/>
            <person name="Collins M."/>
            <person name="Connor R."/>
            <person name="Cronin A."/>
            <person name="Davis P."/>
            <person name="Feltwell T."/>
            <person name="Fraser A."/>
            <person name="Gentles S."/>
            <person name="Goble A."/>
            <person name="Hamlin N."/>
            <person name="Harris D.E."/>
            <person name="Hidalgo J."/>
            <person name="Hodgson G."/>
            <person name="Holroyd S."/>
            <person name="Hornsby T."/>
            <person name="Howarth S."/>
            <person name="Huckle E.J."/>
            <person name="Hunt S."/>
            <person name="Jagels K."/>
            <person name="James K.D."/>
            <person name="Jones L."/>
            <person name="Jones M."/>
            <person name="Leather S."/>
            <person name="McDonald S."/>
            <person name="McLean J."/>
            <person name="Mooney P."/>
            <person name="Moule S."/>
            <person name="Mungall K.L."/>
            <person name="Murphy L.D."/>
            <person name="Niblett D."/>
            <person name="Odell C."/>
            <person name="Oliver K."/>
            <person name="O'Neil S."/>
            <person name="Pearson D."/>
            <person name="Quail M.A."/>
            <person name="Rabbinowitsch E."/>
            <person name="Rutherford K.M."/>
            <person name="Rutter S."/>
            <person name="Saunders D."/>
            <person name="Seeger K."/>
            <person name="Sharp S."/>
            <person name="Skelton J."/>
            <person name="Simmonds M.N."/>
            <person name="Squares R."/>
            <person name="Squares S."/>
            <person name="Stevens K."/>
            <person name="Taylor K."/>
            <person name="Taylor R.G."/>
            <person name="Tivey A."/>
            <person name="Walsh S.V."/>
            <person name="Warren T."/>
            <person name="Whitehead S."/>
            <person name="Woodward J.R."/>
            <person name="Volckaert G."/>
            <person name="Aert R."/>
            <person name="Robben J."/>
            <person name="Grymonprez B."/>
            <person name="Weltjens I."/>
            <person name="Vanstreels E."/>
            <person name="Rieger M."/>
            <person name="Schaefer M."/>
            <person name="Mueller-Auer S."/>
            <person name="Gabel C."/>
            <person name="Fuchs M."/>
            <person name="Duesterhoeft A."/>
            <person name="Fritzc C."/>
            <person name="Holzer E."/>
            <person name="Moestl D."/>
            <person name="Hilbert H."/>
            <person name="Borzym K."/>
            <person name="Langer I."/>
            <person name="Beck A."/>
            <person name="Lehrach H."/>
            <person name="Reinhardt R."/>
            <person name="Pohl T.M."/>
            <person name="Eger P."/>
            <person name="Zimmermann W."/>
            <person name="Wedler H."/>
            <person name="Wambutt R."/>
            <person name="Purnelle B."/>
            <person name="Goffeau A."/>
            <person name="Cadieu E."/>
            <person name="Dreano S."/>
            <person name="Gloux S."/>
            <person name="Lelaure V."/>
            <person name="Mottier S."/>
            <person name="Galibert F."/>
            <person name="Aves S.J."/>
            <person name="Xiang Z."/>
            <person name="Hunt C."/>
            <person name="Moore K."/>
            <person name="Hurst S.M."/>
            <person name="Lucas M."/>
            <person name="Rochet M."/>
            <person name="Gaillardin C."/>
            <person name="Tallada V.A."/>
            <person name="Garzon A."/>
            <person name="Thode G."/>
            <person name="Daga R.R."/>
            <person name="Cruzado L."/>
            <person name="Jimenez J."/>
            <person name="Sanchez M."/>
            <person name="del Rey F."/>
            <person name="Benito J."/>
            <person name="Dominguez A."/>
            <person name="Revuelta J.L."/>
            <person name="Moreno S."/>
            <person name="Armstrong J."/>
            <person name="Forsburg S.L."/>
            <person name="Cerutti L."/>
            <person name="Lowe T."/>
            <person name="McCombie W.R."/>
            <person name="Paulsen I."/>
            <person name="Potashkin J."/>
            <person name="Shpakovski G.V."/>
            <person name="Ussery D."/>
            <person name="Barrell B.G."/>
            <person name="Nurse P."/>
        </authorList>
    </citation>
    <scope>NUCLEOTIDE SEQUENCE [LARGE SCALE GENOMIC DNA]</scope>
    <source>
        <strain>972 / ATCC 24843</strain>
    </source>
</reference>
<comment type="function">
    <text evidence="2">Regulatory subunit of casein kinase II/CK2 (By similarity). As part of the kinase complex regulates the basal catalytic activity of the alpha subunit a constitutively active serine/threonine-protein kinase that phosphorylates a large number of substrates containing acidic residues C-terminal to the phosphorylated serine or threonine (By similarity).</text>
</comment>
<comment type="subunit">
    <text evidence="1">Tetramer composed of two alpha chains, one beta chain and one beta' chain.</text>
</comment>
<comment type="PTM">
    <text evidence="2">Phosphorylated by alpha subunit.</text>
</comment>
<comment type="similarity">
    <text evidence="3">Belongs to the casein kinase 2 subunit beta family.</text>
</comment>
<evidence type="ECO:0000250" key="1">
    <source>
        <dbReference type="UniProtKB" id="P38930"/>
    </source>
</evidence>
<evidence type="ECO:0000250" key="2">
    <source>
        <dbReference type="UniProtKB" id="P67870"/>
    </source>
</evidence>
<evidence type="ECO:0000305" key="3"/>
<evidence type="ECO:0000312" key="4">
    <source>
        <dbReference type="PomBase" id="SPBC2G5.02c"/>
    </source>
</evidence>